<dbReference type="EC" id="6.2.1.5" evidence="1"/>
<dbReference type="EMBL" id="CP000872">
    <property type="protein sequence ID" value="ABX62960.1"/>
    <property type="molecule type" value="Genomic_DNA"/>
</dbReference>
<dbReference type="RefSeq" id="WP_002964994.1">
    <property type="nucleotide sequence ID" value="NC_010103.1"/>
</dbReference>
<dbReference type="SMR" id="A9M8R2"/>
<dbReference type="GeneID" id="97534788"/>
<dbReference type="KEGG" id="bcs:BCAN_A1970"/>
<dbReference type="HOGENOM" id="CLU_037430_0_2_5"/>
<dbReference type="PhylomeDB" id="A9M8R2"/>
<dbReference type="UniPathway" id="UPA00223">
    <property type="reaction ID" value="UER00999"/>
</dbReference>
<dbReference type="Proteomes" id="UP000001385">
    <property type="component" value="Chromosome I"/>
</dbReference>
<dbReference type="GO" id="GO:0005829">
    <property type="term" value="C:cytosol"/>
    <property type="evidence" value="ECO:0007669"/>
    <property type="project" value="TreeGrafter"/>
</dbReference>
<dbReference type="GO" id="GO:0042709">
    <property type="term" value="C:succinate-CoA ligase complex"/>
    <property type="evidence" value="ECO:0007669"/>
    <property type="project" value="TreeGrafter"/>
</dbReference>
<dbReference type="GO" id="GO:0005524">
    <property type="term" value="F:ATP binding"/>
    <property type="evidence" value="ECO:0007669"/>
    <property type="project" value="UniProtKB-UniRule"/>
</dbReference>
<dbReference type="GO" id="GO:0000287">
    <property type="term" value="F:magnesium ion binding"/>
    <property type="evidence" value="ECO:0007669"/>
    <property type="project" value="UniProtKB-UniRule"/>
</dbReference>
<dbReference type="GO" id="GO:0004775">
    <property type="term" value="F:succinate-CoA ligase (ADP-forming) activity"/>
    <property type="evidence" value="ECO:0007669"/>
    <property type="project" value="UniProtKB-UniRule"/>
</dbReference>
<dbReference type="GO" id="GO:0004776">
    <property type="term" value="F:succinate-CoA ligase (GDP-forming) activity"/>
    <property type="evidence" value="ECO:0007669"/>
    <property type="project" value="RHEA"/>
</dbReference>
<dbReference type="GO" id="GO:0006104">
    <property type="term" value="P:succinyl-CoA metabolic process"/>
    <property type="evidence" value="ECO:0007669"/>
    <property type="project" value="TreeGrafter"/>
</dbReference>
<dbReference type="GO" id="GO:0006099">
    <property type="term" value="P:tricarboxylic acid cycle"/>
    <property type="evidence" value="ECO:0007669"/>
    <property type="project" value="UniProtKB-UniRule"/>
</dbReference>
<dbReference type="FunFam" id="3.30.1490.20:FF:000002">
    <property type="entry name" value="Succinate--CoA ligase [ADP-forming] subunit beta"/>
    <property type="match status" value="1"/>
</dbReference>
<dbReference type="FunFam" id="3.30.470.20:FF:000002">
    <property type="entry name" value="Succinate--CoA ligase [ADP-forming] subunit beta"/>
    <property type="match status" value="1"/>
</dbReference>
<dbReference type="FunFam" id="3.40.50.261:FF:000001">
    <property type="entry name" value="Succinate--CoA ligase [ADP-forming] subunit beta"/>
    <property type="match status" value="1"/>
</dbReference>
<dbReference type="Gene3D" id="3.30.1490.20">
    <property type="entry name" value="ATP-grasp fold, A domain"/>
    <property type="match status" value="1"/>
</dbReference>
<dbReference type="Gene3D" id="3.30.470.20">
    <property type="entry name" value="ATP-grasp fold, B domain"/>
    <property type="match status" value="1"/>
</dbReference>
<dbReference type="Gene3D" id="3.40.50.261">
    <property type="entry name" value="Succinyl-CoA synthetase domains"/>
    <property type="match status" value="1"/>
</dbReference>
<dbReference type="HAMAP" id="MF_00558">
    <property type="entry name" value="Succ_CoA_beta"/>
    <property type="match status" value="1"/>
</dbReference>
<dbReference type="InterPro" id="IPR011761">
    <property type="entry name" value="ATP-grasp"/>
</dbReference>
<dbReference type="InterPro" id="IPR013650">
    <property type="entry name" value="ATP-grasp_succ-CoA_synth-type"/>
</dbReference>
<dbReference type="InterPro" id="IPR013815">
    <property type="entry name" value="ATP_grasp_subdomain_1"/>
</dbReference>
<dbReference type="InterPro" id="IPR017866">
    <property type="entry name" value="Succ-CoA_synthase_bsu_CS"/>
</dbReference>
<dbReference type="InterPro" id="IPR005811">
    <property type="entry name" value="SUCC_ACL_C"/>
</dbReference>
<dbReference type="InterPro" id="IPR005809">
    <property type="entry name" value="Succ_CoA_ligase-like_bsu"/>
</dbReference>
<dbReference type="InterPro" id="IPR016102">
    <property type="entry name" value="Succinyl-CoA_synth-like"/>
</dbReference>
<dbReference type="NCBIfam" id="NF001913">
    <property type="entry name" value="PRK00696.1"/>
    <property type="match status" value="1"/>
</dbReference>
<dbReference type="NCBIfam" id="TIGR01016">
    <property type="entry name" value="sucCoAbeta"/>
    <property type="match status" value="1"/>
</dbReference>
<dbReference type="PANTHER" id="PTHR11815:SF10">
    <property type="entry name" value="SUCCINATE--COA LIGASE [GDP-FORMING] SUBUNIT BETA, MITOCHONDRIAL"/>
    <property type="match status" value="1"/>
</dbReference>
<dbReference type="PANTHER" id="PTHR11815">
    <property type="entry name" value="SUCCINYL-COA SYNTHETASE BETA CHAIN"/>
    <property type="match status" value="1"/>
</dbReference>
<dbReference type="Pfam" id="PF08442">
    <property type="entry name" value="ATP-grasp_2"/>
    <property type="match status" value="1"/>
</dbReference>
<dbReference type="Pfam" id="PF00549">
    <property type="entry name" value="Ligase_CoA"/>
    <property type="match status" value="1"/>
</dbReference>
<dbReference type="PIRSF" id="PIRSF001554">
    <property type="entry name" value="SucCS_beta"/>
    <property type="match status" value="1"/>
</dbReference>
<dbReference type="SUPFAM" id="SSF56059">
    <property type="entry name" value="Glutathione synthetase ATP-binding domain-like"/>
    <property type="match status" value="1"/>
</dbReference>
<dbReference type="SUPFAM" id="SSF52210">
    <property type="entry name" value="Succinyl-CoA synthetase domains"/>
    <property type="match status" value="1"/>
</dbReference>
<dbReference type="PROSITE" id="PS50975">
    <property type="entry name" value="ATP_GRASP"/>
    <property type="match status" value="1"/>
</dbReference>
<dbReference type="PROSITE" id="PS01217">
    <property type="entry name" value="SUCCINYL_COA_LIG_3"/>
    <property type="match status" value="1"/>
</dbReference>
<gene>
    <name evidence="1" type="primary">sucC</name>
    <name type="ordered locus">BCAN_A1970</name>
</gene>
<keyword id="KW-0067">ATP-binding</keyword>
<keyword id="KW-0436">Ligase</keyword>
<keyword id="KW-0460">Magnesium</keyword>
<keyword id="KW-0479">Metal-binding</keyword>
<keyword id="KW-0547">Nucleotide-binding</keyword>
<keyword id="KW-1185">Reference proteome</keyword>
<keyword id="KW-0816">Tricarboxylic acid cycle</keyword>
<reference key="1">
    <citation type="submission" date="2007-10" db="EMBL/GenBank/DDBJ databases">
        <title>Brucella canis ATCC 23365 whole genome shotgun sequencing project.</title>
        <authorList>
            <person name="Setubal J.C."/>
            <person name="Bowns C."/>
            <person name="Boyle S."/>
            <person name="Crasta O.R."/>
            <person name="Czar M.J."/>
            <person name="Dharmanolla C."/>
            <person name="Gillespie J.J."/>
            <person name="Kenyon R.W."/>
            <person name="Lu J."/>
            <person name="Mane S."/>
            <person name="Mohapatra S."/>
            <person name="Nagrani S."/>
            <person name="Purkayastha A."/>
            <person name="Rajasimha H.K."/>
            <person name="Shallom J.M."/>
            <person name="Shallom S."/>
            <person name="Shukla M."/>
            <person name="Snyder E.E."/>
            <person name="Sobral B.W."/>
            <person name="Wattam A.R."/>
            <person name="Will R."/>
            <person name="Williams K."/>
            <person name="Yoo H."/>
            <person name="Bruce D."/>
            <person name="Detter C."/>
            <person name="Munk C."/>
            <person name="Brettin T.S."/>
        </authorList>
    </citation>
    <scope>NUCLEOTIDE SEQUENCE [LARGE SCALE GENOMIC DNA]</scope>
    <source>
        <strain>ATCC 23365 / NCTC 10854 / RM-666</strain>
    </source>
</reference>
<evidence type="ECO:0000255" key="1">
    <source>
        <dbReference type="HAMAP-Rule" id="MF_00558"/>
    </source>
</evidence>
<protein>
    <recommendedName>
        <fullName evidence="1">Succinate--CoA ligase [ADP-forming] subunit beta</fullName>
        <ecNumber evidence="1">6.2.1.5</ecNumber>
    </recommendedName>
    <alternativeName>
        <fullName evidence="1">Succinyl-CoA synthetase subunit beta</fullName>
        <shortName evidence="1">SCS-beta</shortName>
    </alternativeName>
</protein>
<sequence length="398" mass="42527">MNIHEYQAKRLLHTYGAPIANGVAVYSVEQAEEWAKTLPGPLYVVKSQIHAGGRGKGKFKELPADAKGGVRLAKSVEEVVANAKEMLGNTLVTKQTGEAGKQVNRLYIEDGADIERELYLSILIDRSVGRPAFVVSTEGGMDIEAVAEETPEKIVTVAIDPAKGVTDEDANKLADALKLEGGAREDGLKLFPILYKAFTEKDMSLLEINPLIVMTNGRVRVLDAKVSFDNNALFRHPDIVELRDLTEEDPKEIEASKYDLAYVALDGNIGCMVNGAGLAMATMDIIKLYGAEPANFLDVGGGASKEKVTAAFKIITADPAVEGILVNIFGGIMKCDVIAEGVIAAVKEVGLKVPLVVRLEGTNVELGKKIINESGLNVISADDLDDAAQKIVAAVKGN</sequence>
<proteinExistence type="inferred from homology"/>
<name>SUCC_BRUC2</name>
<comment type="function">
    <text evidence="1">Succinyl-CoA synthetase functions in the citric acid cycle (TCA), coupling the hydrolysis of succinyl-CoA to the synthesis of either ATP or GTP and thus represents the only step of substrate-level phosphorylation in the TCA. The beta subunit provides nucleotide specificity of the enzyme and binds the substrate succinate, while the binding sites for coenzyme A and phosphate are found in the alpha subunit.</text>
</comment>
<comment type="catalytic activity">
    <reaction evidence="1">
        <text>succinate + ATP + CoA = succinyl-CoA + ADP + phosphate</text>
        <dbReference type="Rhea" id="RHEA:17661"/>
        <dbReference type="ChEBI" id="CHEBI:30031"/>
        <dbReference type="ChEBI" id="CHEBI:30616"/>
        <dbReference type="ChEBI" id="CHEBI:43474"/>
        <dbReference type="ChEBI" id="CHEBI:57287"/>
        <dbReference type="ChEBI" id="CHEBI:57292"/>
        <dbReference type="ChEBI" id="CHEBI:456216"/>
        <dbReference type="EC" id="6.2.1.5"/>
    </reaction>
    <physiologicalReaction direction="right-to-left" evidence="1">
        <dbReference type="Rhea" id="RHEA:17663"/>
    </physiologicalReaction>
</comment>
<comment type="catalytic activity">
    <reaction evidence="1">
        <text>GTP + succinate + CoA = succinyl-CoA + GDP + phosphate</text>
        <dbReference type="Rhea" id="RHEA:22120"/>
        <dbReference type="ChEBI" id="CHEBI:30031"/>
        <dbReference type="ChEBI" id="CHEBI:37565"/>
        <dbReference type="ChEBI" id="CHEBI:43474"/>
        <dbReference type="ChEBI" id="CHEBI:57287"/>
        <dbReference type="ChEBI" id="CHEBI:57292"/>
        <dbReference type="ChEBI" id="CHEBI:58189"/>
    </reaction>
    <physiologicalReaction direction="right-to-left" evidence="1">
        <dbReference type="Rhea" id="RHEA:22122"/>
    </physiologicalReaction>
</comment>
<comment type="cofactor">
    <cofactor evidence="1">
        <name>Mg(2+)</name>
        <dbReference type="ChEBI" id="CHEBI:18420"/>
    </cofactor>
    <text evidence="1">Binds 1 Mg(2+) ion per subunit.</text>
</comment>
<comment type="pathway">
    <text evidence="1">Carbohydrate metabolism; tricarboxylic acid cycle; succinate from succinyl-CoA (ligase route): step 1/1.</text>
</comment>
<comment type="subunit">
    <text evidence="1">Heterotetramer of two alpha and two beta subunits.</text>
</comment>
<comment type="similarity">
    <text evidence="1">Belongs to the succinate/malate CoA ligase beta subunit family.</text>
</comment>
<organism>
    <name type="scientific">Brucella canis (strain ATCC 23365 / NCTC 10854 / RM-666)</name>
    <dbReference type="NCBI Taxonomy" id="483179"/>
    <lineage>
        <taxon>Bacteria</taxon>
        <taxon>Pseudomonadati</taxon>
        <taxon>Pseudomonadota</taxon>
        <taxon>Alphaproteobacteria</taxon>
        <taxon>Hyphomicrobiales</taxon>
        <taxon>Brucellaceae</taxon>
        <taxon>Brucella/Ochrobactrum group</taxon>
        <taxon>Brucella</taxon>
    </lineage>
</organism>
<feature type="chain" id="PRO_1000082032" description="Succinate--CoA ligase [ADP-forming] subunit beta">
    <location>
        <begin position="1"/>
        <end position="398"/>
    </location>
</feature>
<feature type="domain" description="ATP-grasp" evidence="1">
    <location>
        <begin position="9"/>
        <end position="254"/>
    </location>
</feature>
<feature type="binding site" evidence="1">
    <location>
        <position position="46"/>
    </location>
    <ligand>
        <name>ATP</name>
        <dbReference type="ChEBI" id="CHEBI:30616"/>
    </ligand>
</feature>
<feature type="binding site" evidence="1">
    <location>
        <begin position="53"/>
        <end position="55"/>
    </location>
    <ligand>
        <name>ATP</name>
        <dbReference type="ChEBI" id="CHEBI:30616"/>
    </ligand>
</feature>
<feature type="binding site" evidence="1">
    <location>
        <position position="109"/>
    </location>
    <ligand>
        <name>ATP</name>
        <dbReference type="ChEBI" id="CHEBI:30616"/>
    </ligand>
</feature>
<feature type="binding site" evidence="1">
    <location>
        <position position="112"/>
    </location>
    <ligand>
        <name>ATP</name>
        <dbReference type="ChEBI" id="CHEBI:30616"/>
    </ligand>
</feature>
<feature type="binding site" evidence="1">
    <location>
        <position position="117"/>
    </location>
    <ligand>
        <name>ATP</name>
        <dbReference type="ChEBI" id="CHEBI:30616"/>
    </ligand>
</feature>
<feature type="binding site" evidence="1">
    <location>
        <position position="209"/>
    </location>
    <ligand>
        <name>Mg(2+)</name>
        <dbReference type="ChEBI" id="CHEBI:18420"/>
    </ligand>
</feature>
<feature type="binding site" evidence="1">
    <location>
        <position position="223"/>
    </location>
    <ligand>
        <name>Mg(2+)</name>
        <dbReference type="ChEBI" id="CHEBI:18420"/>
    </ligand>
</feature>
<feature type="binding site" evidence="1">
    <location>
        <position position="274"/>
    </location>
    <ligand>
        <name>substrate</name>
        <note>ligand shared with subunit alpha</note>
    </ligand>
</feature>
<feature type="binding site" evidence="1">
    <location>
        <begin position="331"/>
        <end position="333"/>
    </location>
    <ligand>
        <name>substrate</name>
        <note>ligand shared with subunit alpha</note>
    </ligand>
</feature>
<accession>A9M8R2</accession>